<feature type="chain" id="PRO_0000099127" description="Scaffold protein OPG125">
    <location>
        <begin position="1"/>
        <end position="551"/>
    </location>
</feature>
<feature type="mutagenesis site" description="Confers 30% resistance to rifampicin." evidence="2">
    <original>K</original>
    <variation>R</variation>
    <location>
        <position position="17"/>
    </location>
</feature>
<feature type="mutagenesis site" description="Confers 35% resistance to rifampicin." evidence="2">
    <original>V</original>
    <variation>F</variation>
    <location>
        <position position="24"/>
    </location>
</feature>
<feature type="mutagenesis site" description="Confers 60% resistance to rifampicin." evidence="2">
    <original>D</original>
    <variation>N</variation>
    <location>
        <position position="25"/>
    </location>
</feature>
<feature type="mutagenesis site" description="Confers 45% resistance to rifampicin." evidence="2">
    <original>D</original>
    <variation>V</variation>
    <location>
        <position position="25"/>
    </location>
</feature>
<feature type="mutagenesis site" description="Confers 40% resistance to rifampicin." evidence="2">
    <original>S</original>
    <variation>C</variation>
    <location>
        <position position="26"/>
    </location>
</feature>
<feature type="mutagenesis site" description="Confers 50% resistance to rifampicin." evidence="2">
    <original>Q</original>
    <variation>K</variation>
    <location>
        <position position="27"/>
    </location>
</feature>
<feature type="mutagenesis site" description="Confers 50% resistance to rifampicin." evidence="2">
    <original>T</original>
    <variation>I</variation>
    <location>
        <position position="30"/>
    </location>
</feature>
<feature type="mutagenesis site" description="Confers 20% resistance to rifampicin." evidence="2">
    <original>M</original>
    <variation>I</variation>
    <location>
        <position position="33"/>
    </location>
</feature>
<feature type="mutagenesis site" description="Confers 30% resistance to rifampicin." evidence="2">
    <original>C</original>
    <variation>Y</variation>
    <location>
        <position position="94"/>
    </location>
</feature>
<feature type="mutagenesis site" description="Confers 50% resistance to rifampicin." evidence="2">
    <original>D</original>
    <variation>Y</variation>
    <location>
        <position position="175"/>
    </location>
</feature>
<feature type="mutagenesis site" description="Confers 40% resistance to rifampicin." evidence="2">
    <original>V</original>
    <variation>A</variation>
    <location>
        <position position="222"/>
    </location>
</feature>
<feature type="mutagenesis site" description="Confers 50% resistance to rifampicin." evidence="2">
    <original>S</original>
    <variation>L</variation>
    <location>
        <position position="227"/>
    </location>
</feature>
<feature type="mutagenesis site" description="Confers 50% resistance to rifampicin." evidence="2">
    <original>R</original>
    <variation>I</variation>
    <location>
        <position position="234"/>
    </location>
</feature>
<feature type="mutagenesis site" description="Confers 30% resistance to rifampicin." evidence="2">
    <original>T</original>
    <variation>M</variation>
    <location>
        <position position="243"/>
    </location>
</feature>
<feature type="mutagenesis site" description="Confers 30% resistance to rifampicin." evidence="2">
    <original>E</original>
    <variation>K</variation>
    <location>
        <position position="314"/>
    </location>
</feature>
<feature type="mutagenesis site" description="Confers 40% resistance to rifampicin." evidence="2">
    <original>K</original>
    <variation>M</variation>
    <location>
        <position position="429"/>
    </location>
</feature>
<feature type="mutagenesis site" description="Confers 45% resistance to rifampicin." evidence="2">
    <original>I</original>
    <variation>N</variation>
    <location>
        <position position="439"/>
    </location>
</feature>
<feature type="mutagenesis site" description="Confers 50% resistance to rifampicin." evidence="2">
    <original>E</original>
    <variation>D</variation>
    <location>
        <position position="465"/>
    </location>
</feature>
<feature type="mutagenesis site" description="Confers 80% resistance to rifampicin." evidence="2">
    <original>N</original>
    <variation>D</variation>
    <location>
        <position position="480"/>
    </location>
</feature>
<feature type="mutagenesis site" description="Confers 70% resistance to rifampicin." evidence="2">
    <original>K</original>
    <variation>M</variation>
    <location>
        <position position="484"/>
    </location>
</feature>
<feature type="mutagenesis site" description="Confers 60% resistance to rifampicin." evidence="2">
    <original>I</original>
    <variation>L</variation>
    <location>
        <position position="485"/>
    </location>
</feature>
<feature type="mutagenesis site" description="Confers 40% resistance to rifampicin." evidence="2">
    <original>I</original>
    <variation>T</variation>
    <location>
        <position position="485"/>
    </location>
</feature>
<feature type="mutagenesis site" description="Confers 40% resistance to rifampicin." evidence="2">
    <original>R</original>
    <variation>M</variation>
    <location>
        <position position="488"/>
    </location>
</feature>
<feature type="mutagenesis site" description="Confers 35% resistance to rifampicin." evidence="2">
    <original>T</original>
    <variation>A</variation>
    <location>
        <position position="511"/>
    </location>
</feature>
<feature type="mutagenesis site" description="Induces the protein to polymerize into flat, purely hexagonal sheets instead of the curved hexagonal/pentagonal coats that are normally seen on the surface of IV membranes." evidence="1">
    <original>D</original>
    <variation>G</variation>
    <location>
        <position position="513"/>
    </location>
</feature>
<feature type="helix" evidence="15">
    <location>
        <begin position="3"/>
        <end position="8"/>
    </location>
</feature>
<feature type="strand" evidence="15">
    <location>
        <begin position="32"/>
        <end position="40"/>
    </location>
</feature>
<feature type="strand" evidence="15">
    <location>
        <begin position="42"/>
        <end position="44"/>
    </location>
</feature>
<feature type="helix" evidence="11">
    <location>
        <begin position="48"/>
        <end position="50"/>
    </location>
</feature>
<feature type="strand" evidence="15">
    <location>
        <begin position="53"/>
        <end position="58"/>
    </location>
</feature>
<feature type="strand" evidence="15">
    <location>
        <begin position="65"/>
        <end position="75"/>
    </location>
</feature>
<feature type="strand" evidence="15">
    <location>
        <begin position="78"/>
        <end position="86"/>
    </location>
</feature>
<feature type="helix" evidence="15">
    <location>
        <begin position="90"/>
        <end position="93"/>
    </location>
</feature>
<feature type="strand" evidence="15">
    <location>
        <begin position="95"/>
        <end position="102"/>
    </location>
</feature>
<feature type="strand" evidence="15">
    <location>
        <begin position="105"/>
        <end position="111"/>
    </location>
</feature>
<feature type="helix" evidence="15">
    <location>
        <begin position="112"/>
        <end position="119"/>
    </location>
</feature>
<feature type="helix" evidence="15">
    <location>
        <begin position="123"/>
        <end position="128"/>
    </location>
</feature>
<feature type="helix" evidence="15">
    <location>
        <begin position="133"/>
        <end position="136"/>
    </location>
</feature>
<feature type="strand" evidence="15">
    <location>
        <begin position="139"/>
        <end position="141"/>
    </location>
</feature>
<feature type="strand" evidence="15">
    <location>
        <begin position="147"/>
        <end position="149"/>
    </location>
</feature>
<feature type="strand" evidence="15">
    <location>
        <begin position="152"/>
        <end position="158"/>
    </location>
</feature>
<feature type="helix" evidence="15">
    <location>
        <begin position="161"/>
        <end position="163"/>
    </location>
</feature>
<feature type="helix" evidence="15">
    <location>
        <begin position="166"/>
        <end position="169"/>
    </location>
</feature>
<feature type="strand" evidence="15">
    <location>
        <begin position="178"/>
        <end position="184"/>
    </location>
</feature>
<feature type="helix" evidence="15">
    <location>
        <begin position="187"/>
        <end position="190"/>
    </location>
</feature>
<feature type="strand" evidence="15">
    <location>
        <begin position="191"/>
        <end position="193"/>
    </location>
</feature>
<feature type="strand" evidence="14">
    <location>
        <begin position="195"/>
        <end position="197"/>
    </location>
</feature>
<feature type="helix" evidence="15">
    <location>
        <begin position="199"/>
        <end position="205"/>
    </location>
</feature>
<feature type="strand" evidence="15">
    <location>
        <begin position="210"/>
        <end position="221"/>
    </location>
</feature>
<feature type="strand" evidence="15">
    <location>
        <begin position="227"/>
        <end position="236"/>
    </location>
</feature>
<feature type="strand" evidence="15">
    <location>
        <begin position="242"/>
        <end position="246"/>
    </location>
</feature>
<feature type="strand" evidence="15">
    <location>
        <begin position="250"/>
        <end position="262"/>
    </location>
</feature>
<feature type="strand" evidence="13">
    <location>
        <begin position="264"/>
        <end position="266"/>
    </location>
</feature>
<feature type="strand" evidence="15">
    <location>
        <begin position="269"/>
        <end position="271"/>
    </location>
</feature>
<feature type="helix" evidence="15">
    <location>
        <begin position="280"/>
        <end position="295"/>
    </location>
</feature>
<feature type="strand" evidence="15">
    <location>
        <begin position="296"/>
        <end position="302"/>
    </location>
</feature>
<feature type="strand" evidence="15">
    <location>
        <begin position="312"/>
        <end position="314"/>
    </location>
</feature>
<feature type="strand" evidence="15">
    <location>
        <begin position="320"/>
        <end position="323"/>
    </location>
</feature>
<feature type="strand" evidence="15">
    <location>
        <begin position="326"/>
        <end position="334"/>
    </location>
</feature>
<feature type="strand" evidence="15">
    <location>
        <begin position="340"/>
        <end position="345"/>
    </location>
</feature>
<feature type="strand" evidence="15">
    <location>
        <begin position="347"/>
        <end position="350"/>
    </location>
</feature>
<feature type="helix" evidence="15">
    <location>
        <begin position="361"/>
        <end position="364"/>
    </location>
</feature>
<feature type="strand" evidence="15">
    <location>
        <begin position="365"/>
        <end position="373"/>
    </location>
</feature>
<feature type="turn" evidence="15">
    <location>
        <begin position="374"/>
        <end position="377"/>
    </location>
</feature>
<feature type="strand" evidence="15">
    <location>
        <begin position="378"/>
        <end position="386"/>
    </location>
</feature>
<feature type="helix" evidence="15">
    <location>
        <begin position="390"/>
        <end position="394"/>
    </location>
</feature>
<feature type="helix" evidence="15">
    <location>
        <begin position="397"/>
        <end position="400"/>
    </location>
</feature>
<feature type="helix" evidence="15">
    <location>
        <begin position="414"/>
        <end position="417"/>
    </location>
</feature>
<feature type="strand" evidence="12">
    <location>
        <begin position="421"/>
        <end position="423"/>
    </location>
</feature>
<feature type="strand" evidence="14">
    <location>
        <begin position="430"/>
        <end position="432"/>
    </location>
</feature>
<feature type="strand" evidence="15">
    <location>
        <begin position="440"/>
        <end position="447"/>
    </location>
</feature>
<feature type="strand" evidence="15">
    <location>
        <begin position="450"/>
        <end position="458"/>
    </location>
</feature>
<feature type="helix" evidence="15">
    <location>
        <begin position="459"/>
        <end position="468"/>
    </location>
</feature>
<feature type="strand" evidence="15">
    <location>
        <begin position="475"/>
        <end position="478"/>
    </location>
</feature>
<feature type="turn" evidence="15">
    <location>
        <begin position="484"/>
        <end position="486"/>
    </location>
</feature>
<feature type="turn" evidence="15">
    <location>
        <begin position="496"/>
        <end position="499"/>
    </location>
</feature>
<feature type="strand" evidence="15">
    <location>
        <begin position="503"/>
        <end position="509"/>
    </location>
</feature>
<feature type="helix" evidence="15">
    <location>
        <begin position="517"/>
        <end position="520"/>
    </location>
</feature>
<feature type="strand" evidence="15">
    <location>
        <begin position="522"/>
        <end position="536"/>
    </location>
</feature>
<feature type="strand" evidence="15">
    <location>
        <begin position="538"/>
        <end position="540"/>
    </location>
</feature>
<feature type="strand" evidence="15">
    <location>
        <begin position="542"/>
        <end position="545"/>
    </location>
</feature>
<sequence>MNNTIINSLIGGDDSIKRSNVFAVDSQIPTLYMPQYISLSGVMTNDGPDNQAIASFEIRDQYITALNHLVLSLELPEVKGMGRFGYVPYVGYKCINHVSISSCNGVIWEIEGEELYNNCINNTIALKHSGYSSELNDISIGLTPNDTIKEPSTVYVYIKTPFDVEDTFSSLKLSDSKITVTVTFNPVSDIVIRDSSFDFETFNKEFVYVPELSFIGYMVKNVQIKPSFIEKPRRVIGQINQPTATVTEVHAATSLSVYTKPYYGNTDNKFISYPGYSQDEKDYIDAYVSRLLDDLVIVSDGPPTGYPESAEIVEVPEDGIVSIQDADVYVKIDNVPDNMSVYLHTNLLMFGTRKNSFIYNISKKFSAITGTYSDATKRTIFAHISHSINIIDTSIPVSLWTSQRNVYNGDNRSAESKAKDLFINDPFIKGIDFKNKTDIISRLEVRFGNDVLYSENGPISRIYNELLTKSNNGTRTLTFNFTPKIFFRPTTITANVSRGKDKLSVRVVYSTMDVNHPIYYVQKQLVVVCNDLYKVSYDQGVSITKIMGDNN</sequence>
<gene>
    <name type="primary">OPG125</name>
    <name type="ordered locus">VACWR118</name>
    <name type="ORF">D13L</name>
</gene>
<dbReference type="EMBL" id="M15058">
    <property type="protein sequence ID" value="AAA48273.1"/>
    <property type="molecule type" value="Genomic_DNA"/>
</dbReference>
<dbReference type="EMBL" id="X03729">
    <property type="protein sequence ID" value="CAA27368.1"/>
    <property type="molecule type" value="Genomic_DNA"/>
</dbReference>
<dbReference type="EMBL" id="AY243312">
    <property type="protein sequence ID" value="AAO89397.1"/>
    <property type="molecule type" value="Genomic_DNA"/>
</dbReference>
<dbReference type="PIR" id="C01146">
    <property type="entry name" value="QQVZ25"/>
</dbReference>
<dbReference type="RefSeq" id="YP_233000.1">
    <property type="nucleotide sequence ID" value="NC_006998.1"/>
</dbReference>
<dbReference type="PDB" id="2YGB">
    <property type="method" value="X-ray"/>
    <property type="resolution" value="2.81 A"/>
    <property type="chains" value="A/B/C=2-551"/>
</dbReference>
<dbReference type="PDB" id="2YGC">
    <property type="method" value="X-ray"/>
    <property type="resolution" value="3.02 A"/>
    <property type="chains" value="A/B/C=2-551"/>
</dbReference>
<dbReference type="PDB" id="3SAM">
    <property type="method" value="X-ray"/>
    <property type="resolution" value="2.55 A"/>
    <property type="chains" value="A/B/C=1-551"/>
</dbReference>
<dbReference type="PDB" id="3SAQ">
    <property type="method" value="X-ray"/>
    <property type="resolution" value="3.51 A"/>
    <property type="chains" value="A/B=1-551"/>
</dbReference>
<dbReference type="PDB" id="6BEB">
    <property type="method" value="X-ray"/>
    <property type="resolution" value="2.55 A"/>
    <property type="chains" value="A/B/C=1-551"/>
</dbReference>
<dbReference type="PDB" id="6BEC">
    <property type="method" value="X-ray"/>
    <property type="resolution" value="2.91 A"/>
    <property type="chains" value="A/B/C=1-551"/>
</dbReference>
<dbReference type="PDB" id="6BED">
    <property type="method" value="X-ray"/>
    <property type="resolution" value="2.75 A"/>
    <property type="chains" value="A/B/C=1-551"/>
</dbReference>
<dbReference type="PDB" id="6BEE">
    <property type="method" value="X-ray"/>
    <property type="resolution" value="3.11 A"/>
    <property type="chains" value="A/B/C=1-551"/>
</dbReference>
<dbReference type="PDB" id="6BEF">
    <property type="method" value="X-ray"/>
    <property type="resolution" value="3.21 A"/>
    <property type="chains" value="A/B/C=1-551"/>
</dbReference>
<dbReference type="PDB" id="6BEG">
    <property type="method" value="X-ray"/>
    <property type="resolution" value="3.10 A"/>
    <property type="chains" value="A/B/C=1-551"/>
</dbReference>
<dbReference type="PDB" id="6BEH">
    <property type="method" value="X-ray"/>
    <property type="resolution" value="3.00 A"/>
    <property type="chains" value="A/B/C=1-551"/>
</dbReference>
<dbReference type="PDB" id="6BEI">
    <property type="method" value="X-ray"/>
    <property type="resolution" value="2.81 A"/>
    <property type="chains" value="A/B/C=1-551"/>
</dbReference>
<dbReference type="PDB" id="7VFD">
    <property type="method" value="EM"/>
    <property type="resolution" value="2.25 A"/>
    <property type="chains" value="A/B/C=1-548"/>
</dbReference>
<dbReference type="PDB" id="7VFE">
    <property type="method" value="EM"/>
    <property type="resolution" value="2.63 A"/>
    <property type="chains" value="A/B/C=1-548"/>
</dbReference>
<dbReference type="PDB" id="7VFF">
    <property type="method" value="EM"/>
    <property type="resolution" value="4.10 A"/>
    <property type="chains" value="A/B/C=18-548"/>
</dbReference>
<dbReference type="PDB" id="7VFG">
    <property type="method" value="EM"/>
    <property type="resolution" value="3.87 A"/>
    <property type="chains" value="A/B/C/D/E/F=1-548"/>
</dbReference>
<dbReference type="PDB" id="7VFH">
    <property type="method" value="EM"/>
    <property type="resolution" value="3.90 A"/>
    <property type="chains" value="A/B/C/D/E/F/G/H/I/J/K/L/M/N/O/P/Q/R=18-548"/>
</dbReference>
<dbReference type="PDB" id="8ARH">
    <property type="method" value="EM"/>
    <property type="resolution" value="19.20 A"/>
    <property type="chains" value="A/B/C/D/E/F=1-551"/>
</dbReference>
<dbReference type="PDB" id="8F47">
    <property type="method" value="X-ray"/>
    <property type="resolution" value="3.10 A"/>
    <property type="chains" value="A/B/C=1-551"/>
</dbReference>
<dbReference type="PDB" id="8F65">
    <property type="method" value="X-ray"/>
    <property type="resolution" value="2.85 A"/>
    <property type="chains" value="A/B/C=1-551"/>
</dbReference>
<dbReference type="PDBsum" id="2YGB"/>
<dbReference type="PDBsum" id="2YGC"/>
<dbReference type="PDBsum" id="3SAM"/>
<dbReference type="PDBsum" id="3SAQ"/>
<dbReference type="PDBsum" id="6BEB"/>
<dbReference type="PDBsum" id="6BEC"/>
<dbReference type="PDBsum" id="6BED"/>
<dbReference type="PDBsum" id="6BEE"/>
<dbReference type="PDBsum" id="6BEF"/>
<dbReference type="PDBsum" id="6BEG"/>
<dbReference type="PDBsum" id="6BEH"/>
<dbReference type="PDBsum" id="6BEI"/>
<dbReference type="PDBsum" id="7VFD"/>
<dbReference type="PDBsum" id="7VFE"/>
<dbReference type="PDBsum" id="7VFF"/>
<dbReference type="PDBsum" id="7VFG"/>
<dbReference type="PDBsum" id="7VFH"/>
<dbReference type="PDBsum" id="8ARH"/>
<dbReference type="PDBsum" id="8F47"/>
<dbReference type="PDBsum" id="8F65"/>
<dbReference type="EMDB" id="EMD-15602"/>
<dbReference type="EMDB" id="EMD-31949"/>
<dbReference type="EMDB" id="EMD-31950"/>
<dbReference type="EMDB" id="EMD-31951"/>
<dbReference type="EMDB" id="EMD-31952"/>
<dbReference type="EMDB" id="EMD-31953"/>
<dbReference type="EMDB" id="EMD-31954"/>
<dbReference type="SMR" id="P68440"/>
<dbReference type="DIP" id="DIP-59139N"/>
<dbReference type="DNASU" id="3707516"/>
<dbReference type="GeneID" id="3707516"/>
<dbReference type="KEGG" id="vg:3707516"/>
<dbReference type="EvolutionaryTrace" id="P68440"/>
<dbReference type="Proteomes" id="UP000000344">
    <property type="component" value="Genome"/>
</dbReference>
<dbReference type="GO" id="GO:0016020">
    <property type="term" value="C:membrane"/>
    <property type="evidence" value="ECO:0007669"/>
    <property type="project" value="UniProtKB-SubCell"/>
</dbReference>
<dbReference type="GO" id="GO:0042802">
    <property type="term" value="F:identical protein binding"/>
    <property type="evidence" value="ECO:0000353"/>
    <property type="project" value="IntAct"/>
</dbReference>
<dbReference type="GO" id="GO:0046677">
    <property type="term" value="P:response to antibiotic"/>
    <property type="evidence" value="ECO:0007669"/>
    <property type="project" value="InterPro"/>
</dbReference>
<dbReference type="Gene3D" id="2.70.9.10">
    <property type="entry name" value="Adenovirus Type 2 Hexon, domain 4"/>
    <property type="match status" value="1"/>
</dbReference>
<dbReference type="InterPro" id="IPR005008">
    <property type="entry name" value="Poxvirus_Rif-R"/>
</dbReference>
<dbReference type="Pfam" id="PF03340">
    <property type="entry name" value="Pox_Rif"/>
    <property type="match status" value="1"/>
</dbReference>
<proteinExistence type="evidence at protein level"/>
<comment type="function">
    <text evidence="3 4">Scaffold protein which forms a transitory spherical honeycomb lattice providing curvature and rigidity to the convex membrane of crescent and immature virions (IV). This association occurs concomitantly with viral membrane formation. Targeted by the drug rifampicin, which prevents the formation of this lattice, and hence virus morphogenesis. In the presence of rifampicin, irregularly shaped membranes that lack the honeycomb layer accumulate around areas of electron-dense viroplasm. This layer is lost from virions during maturation from IV to mature virion (MV), through the proteolysis of OPG158 N-terminus.</text>
</comment>
<comment type="subunit">
    <text evidence="1 3 4">Homotrimer (PubMed:35361762). Self-assembles to form a layer (PubMed:35361762). Interacts with OPG158 (via N-terminus); this interaction is necessary for OPG125 association with membranes.</text>
</comment>
<comment type="interaction">
    <interactant intactId="EBI-15935427">
        <id>P68440</id>
    </interactant>
    <interactant intactId="EBI-15935427">
        <id>P68440</id>
        <label>OPG125</label>
    </interactant>
    <organismsDiffer>false</organismsDiffer>
    <experiments>2</experiments>
</comment>
<comment type="subcellular location">
    <subcellularLocation>
        <location>Membrane</location>
        <topology>Peripheral membrane protein</topology>
    </subcellularLocation>
    <text>Associates transitorily with crescent and IV membranes.</text>
</comment>
<comment type="induction">
    <text>Expressed in the early phase of the viral replicative cycle.</text>
</comment>
<comment type="miscellaneous">
    <text>Displays structure similarities to capsid proteins.</text>
</comment>
<comment type="similarity">
    <text evidence="5">Belongs to the orthopoxvirus protein OPG125 family.</text>
</comment>
<reference key="1">
    <citation type="journal article" date="1986" name="Virology">
        <title>Nucleotide sequence and genetic map of the 16-kb vaccinia virus HindIII D fragment.</title>
        <authorList>
            <person name="Niles E.G."/>
            <person name="Condit R.C."/>
            <person name="Caro P."/>
            <person name="Davidson K."/>
            <person name="Matusick L."/>
            <person name="Seto J."/>
        </authorList>
    </citation>
    <scope>NUCLEOTIDE SEQUENCE [GENOMIC DNA]</scope>
</reference>
<reference key="2">
    <citation type="journal article" date="1986" name="Nucleic Acids Res.">
        <title>A tandemly-oriented late gene cluster within the vaccinia virus genome.</title>
        <authorList>
            <person name="Weinrich S.L."/>
            <person name="Hruby D.E."/>
        </authorList>
    </citation>
    <scope>NUCLEOTIDE SEQUENCE [GENOMIC DNA]</scope>
</reference>
<reference key="3">
    <citation type="journal article" date="1987" name="Virology">
        <title>Resistance of vaccinia virus to rifampicin conferred by a single nucleotide substitution near the predicted NH2 terminus of a gene encoding an Mr 62,000 polypeptide.</title>
        <authorList>
            <person name="Baldick C.J. Jr."/>
            <person name="Moss B."/>
        </authorList>
    </citation>
    <scope>NUCLEOTIDE SEQUENCE [GENOMIC DNA]</scope>
</reference>
<reference key="4">
    <citation type="submission" date="2003-02" db="EMBL/GenBank/DDBJ databases">
        <title>Sequencing of the coding region of Vaccinia-WR to an average 9-fold redundancy and an error rate of 0.16/10kb.</title>
        <authorList>
            <person name="Esposito J.J."/>
            <person name="Frace A.M."/>
            <person name="Sammons S.A."/>
            <person name="Olsen-Rasmussen M."/>
            <person name="Osborne J."/>
            <person name="Wohlhueter R."/>
        </authorList>
    </citation>
    <scope>NUCLEOTIDE SEQUENCE [LARGE SCALE GENOMIC DNA]</scope>
</reference>
<reference key="5">
    <citation type="journal article" date="2005" name="J. Cell Biol.">
        <title>External scaffold of spherical immature poxvirus particles is made of protein trimers, forming a honeycomb lattice.</title>
        <authorList>
            <person name="Szajner P."/>
            <person name="Weisberg A.S."/>
            <person name="Lebowitz J."/>
            <person name="Heuser J."/>
            <person name="Moss B."/>
        </authorList>
    </citation>
    <scope>SUBUNIT</scope>
    <scope>MUTAGENESIS OF ASP-513</scope>
</reference>
<reference key="6">
    <citation type="journal article" date="2007" name="Virology">
        <title>Amino acid substitutions at multiple sites within the vaccinia virus D13 scaffold protein confer resistance to rifampicin.</title>
        <authorList>
            <person name="Charity J.C."/>
            <person name="Katz E."/>
            <person name="Moss B."/>
        </authorList>
    </citation>
    <scope>MUTAGENESIS OF LYS-17; VAL-24; ASP-25; SER-26; GLN-27; THR-30; MET-33; CYS-94; ASP-175; VAL-222; SER-227; ARG-234; THR-243; GLU-314; LYS-429; ILE-439; GLU-465; ASN-480; LYS-484; ILE-485; ARG-488 AND THR-511</scope>
</reference>
<reference key="7">
    <citation type="journal article" date="2009" name="J. Virol.">
        <title>Assembly and disassembly of the capsid-like external scaffold of immature virions during vaccinia virus morphogenesis.</title>
        <authorList>
            <person name="Bisht H."/>
            <person name="Weisberg A.S."/>
            <person name="Szajner P."/>
            <person name="Moss B."/>
        </authorList>
    </citation>
    <scope>INTERACTION WITH OPG158</scope>
    <scope>FUNCTION</scope>
</reference>
<reference key="8">
    <citation type="journal article" date="2011" name="Structure">
        <title>Insights into the evolution of a complex virus from the crystal structure of vaccinia virus D13.</title>
        <authorList>
            <person name="Bahar M.W."/>
            <person name="Graham S.C."/>
            <person name="Stuart D.I."/>
            <person name="Grimes J.M."/>
        </authorList>
    </citation>
    <scope>X-RAY CRYSTALLOGRAPHY (2.81 ANGSTROMS) OF 2-551</scope>
</reference>
<reference evidence="6 7 8 9 10" key="9">
    <citation type="journal article" date="2022" name="Nat. Commun.">
        <title>Assembly mechanism of the pleomorphic immature poxvirus scaffold.</title>
        <authorList>
            <person name="Hyun J."/>
            <person name="Matsunami H."/>
            <person name="Kim T.G."/>
            <person name="Wolf M."/>
        </authorList>
    </citation>
    <scope>STRUCTURE BY ELECTRON MICROSCOPY (2.25 ANGSTROMS) OF 1-548</scope>
    <scope>FUNCTION</scope>
    <scope>SUBUNIT</scope>
</reference>
<organismHost>
    <name type="scientific">Bos taurus</name>
    <name type="common">Bovine</name>
    <dbReference type="NCBI Taxonomy" id="9913"/>
</organismHost>
<organism>
    <name type="scientific">Vaccinia virus (strain Western Reserve)</name>
    <name type="common">VACV</name>
    <name type="synonym">Vaccinia virus (strain WR)</name>
    <dbReference type="NCBI Taxonomy" id="10254"/>
    <lineage>
        <taxon>Viruses</taxon>
        <taxon>Varidnaviria</taxon>
        <taxon>Bamfordvirae</taxon>
        <taxon>Nucleocytoviricota</taxon>
        <taxon>Pokkesviricetes</taxon>
        <taxon>Chitovirales</taxon>
        <taxon>Poxviridae</taxon>
        <taxon>Chordopoxvirinae</taxon>
        <taxon>Orthopoxvirus</taxon>
        <taxon>Vaccinia virus</taxon>
    </lineage>
</organism>
<keyword id="KW-0002">3D-structure</keyword>
<keyword id="KW-0426">Late protein</keyword>
<keyword id="KW-0472">Membrane</keyword>
<keyword id="KW-1185">Reference proteome</keyword>
<protein>
    <recommendedName>
        <fullName>Scaffold protein OPG125</fullName>
    </recommendedName>
    <alternativeName>
        <fullName>62 kDa protein</fullName>
    </alternativeName>
    <alternativeName>
        <fullName>Rifampicin resistance protein</fullName>
    </alternativeName>
</protein>
<accession>P68440</accession>
<accession>P04321</accession>
<accession>Q85329</accession>
<name>PG125_VACCW</name>
<evidence type="ECO:0000269" key="1">
    <source>
    </source>
</evidence>
<evidence type="ECO:0000269" key="2">
    <source>
    </source>
</evidence>
<evidence type="ECO:0000269" key="3">
    <source>
    </source>
</evidence>
<evidence type="ECO:0000269" key="4">
    <source>
    </source>
</evidence>
<evidence type="ECO:0000305" key="5"/>
<evidence type="ECO:0007744" key="6">
    <source>
        <dbReference type="PDB" id="7VFD"/>
    </source>
</evidence>
<evidence type="ECO:0007744" key="7">
    <source>
        <dbReference type="PDB" id="7VFE"/>
    </source>
</evidence>
<evidence type="ECO:0007744" key="8">
    <source>
        <dbReference type="PDB" id="7VFF"/>
    </source>
</evidence>
<evidence type="ECO:0007744" key="9">
    <source>
        <dbReference type="PDB" id="7VFG"/>
    </source>
</evidence>
<evidence type="ECO:0007744" key="10">
    <source>
        <dbReference type="PDB" id="7VFH"/>
    </source>
</evidence>
<evidence type="ECO:0007829" key="11">
    <source>
        <dbReference type="PDB" id="2YGC"/>
    </source>
</evidence>
<evidence type="ECO:0007829" key="12">
    <source>
        <dbReference type="PDB" id="6BEB"/>
    </source>
</evidence>
<evidence type="ECO:0007829" key="13">
    <source>
        <dbReference type="PDB" id="6BEF"/>
    </source>
</evidence>
<evidence type="ECO:0007829" key="14">
    <source>
        <dbReference type="PDB" id="6BEI"/>
    </source>
</evidence>
<evidence type="ECO:0007829" key="15">
    <source>
        <dbReference type="PDB" id="7VFD"/>
    </source>
</evidence>